<feature type="chain" id="PRO_0000321206" description="Ribosome-binding factor A">
    <location>
        <begin position="1"/>
        <end position="122"/>
    </location>
</feature>
<comment type="function">
    <text evidence="1">One of several proteins that assist in the late maturation steps of the functional core of the 30S ribosomal subunit. Associates with free 30S ribosomal subunits (but not with 30S subunits that are part of 70S ribosomes or polysomes). Required for efficient processing of 16S rRNA. May interact with the 5'-terminal helix region of 16S rRNA.</text>
</comment>
<comment type="subunit">
    <text evidence="1">Monomer. Binds 30S ribosomal subunits, but not 50S ribosomal subunits or 70S ribosomes.</text>
</comment>
<comment type="subcellular location">
    <subcellularLocation>
        <location evidence="1">Cytoplasm</location>
    </subcellularLocation>
</comment>
<comment type="similarity">
    <text evidence="1">Belongs to the RbfA family.</text>
</comment>
<comment type="sequence caution" evidence="2">
    <conflict type="erroneous initiation">
        <sequence resource="EMBL-CDS" id="ABM51423"/>
    </conflict>
    <text>Extended N-terminus.</text>
</comment>
<evidence type="ECO:0000255" key="1">
    <source>
        <dbReference type="HAMAP-Rule" id="MF_00003"/>
    </source>
</evidence>
<evidence type="ECO:0000305" key="2"/>
<organism>
    <name type="scientific">Burkholderia mallei (strain SAVP1)</name>
    <dbReference type="NCBI Taxonomy" id="320388"/>
    <lineage>
        <taxon>Bacteria</taxon>
        <taxon>Pseudomonadati</taxon>
        <taxon>Pseudomonadota</taxon>
        <taxon>Betaproteobacteria</taxon>
        <taxon>Burkholderiales</taxon>
        <taxon>Burkholderiaceae</taxon>
        <taxon>Burkholderia</taxon>
        <taxon>pseudomallei group</taxon>
    </lineage>
</organism>
<gene>
    <name evidence="1" type="primary">rbfA</name>
    <name type="ordered locus">BMASAVP1_A1506</name>
</gene>
<reference key="1">
    <citation type="journal article" date="2010" name="Genome Biol. Evol.">
        <title>Continuing evolution of Burkholderia mallei through genome reduction and large-scale rearrangements.</title>
        <authorList>
            <person name="Losada L."/>
            <person name="Ronning C.M."/>
            <person name="DeShazer D."/>
            <person name="Woods D."/>
            <person name="Fedorova N."/>
            <person name="Kim H.S."/>
            <person name="Shabalina S.A."/>
            <person name="Pearson T.R."/>
            <person name="Brinkac L."/>
            <person name="Tan P."/>
            <person name="Nandi T."/>
            <person name="Crabtree J."/>
            <person name="Badger J."/>
            <person name="Beckstrom-Sternberg S."/>
            <person name="Saqib M."/>
            <person name="Schutzer S.E."/>
            <person name="Keim P."/>
            <person name="Nierman W.C."/>
        </authorList>
    </citation>
    <scope>NUCLEOTIDE SEQUENCE [LARGE SCALE GENOMIC DNA]</scope>
    <source>
        <strain>SAVP1</strain>
    </source>
</reference>
<sequence>MSKKRSSPNRNVQIADQIQRDLSELIMREVKDPRIGIVTIQSVELTPDYAHAKVYFTALTGTPADTQEALNHAAGHLHNLLFKRLHIHTVPTLHFHYDQTIEKAVAMSRLIDEANATRAKDD</sequence>
<dbReference type="EMBL" id="CP000526">
    <property type="protein sequence ID" value="ABM51423.1"/>
    <property type="status" value="ALT_INIT"/>
    <property type="molecule type" value="Genomic_DNA"/>
</dbReference>
<dbReference type="RefSeq" id="WP_004199441.1">
    <property type="nucleotide sequence ID" value="NC_008785.1"/>
</dbReference>
<dbReference type="SMR" id="A1V3N3"/>
<dbReference type="GeneID" id="93060074"/>
<dbReference type="KEGG" id="bmv:BMASAVP1_A1506"/>
<dbReference type="HOGENOM" id="CLU_089475_5_1_4"/>
<dbReference type="GO" id="GO:0005829">
    <property type="term" value="C:cytosol"/>
    <property type="evidence" value="ECO:0007669"/>
    <property type="project" value="TreeGrafter"/>
</dbReference>
<dbReference type="GO" id="GO:0043024">
    <property type="term" value="F:ribosomal small subunit binding"/>
    <property type="evidence" value="ECO:0007669"/>
    <property type="project" value="TreeGrafter"/>
</dbReference>
<dbReference type="GO" id="GO:0030490">
    <property type="term" value="P:maturation of SSU-rRNA"/>
    <property type="evidence" value="ECO:0007669"/>
    <property type="project" value="UniProtKB-UniRule"/>
</dbReference>
<dbReference type="Gene3D" id="3.30.300.20">
    <property type="match status" value="1"/>
</dbReference>
<dbReference type="HAMAP" id="MF_00003">
    <property type="entry name" value="RbfA"/>
    <property type="match status" value="1"/>
</dbReference>
<dbReference type="InterPro" id="IPR015946">
    <property type="entry name" value="KH_dom-like_a/b"/>
</dbReference>
<dbReference type="InterPro" id="IPR000238">
    <property type="entry name" value="RbfA"/>
</dbReference>
<dbReference type="InterPro" id="IPR023799">
    <property type="entry name" value="RbfA_dom_sf"/>
</dbReference>
<dbReference type="NCBIfam" id="TIGR00082">
    <property type="entry name" value="rbfA"/>
    <property type="match status" value="1"/>
</dbReference>
<dbReference type="PANTHER" id="PTHR33515">
    <property type="entry name" value="RIBOSOME-BINDING FACTOR A, CHLOROPLASTIC-RELATED"/>
    <property type="match status" value="1"/>
</dbReference>
<dbReference type="PANTHER" id="PTHR33515:SF1">
    <property type="entry name" value="RIBOSOME-BINDING FACTOR A, CHLOROPLASTIC-RELATED"/>
    <property type="match status" value="1"/>
</dbReference>
<dbReference type="Pfam" id="PF02033">
    <property type="entry name" value="RBFA"/>
    <property type="match status" value="1"/>
</dbReference>
<dbReference type="SUPFAM" id="SSF89919">
    <property type="entry name" value="Ribosome-binding factor A, RbfA"/>
    <property type="match status" value="1"/>
</dbReference>
<name>RBFA_BURMS</name>
<accession>A1V3N3</accession>
<protein>
    <recommendedName>
        <fullName evidence="1">Ribosome-binding factor A</fullName>
    </recommendedName>
</protein>
<keyword id="KW-0963">Cytoplasm</keyword>
<keyword id="KW-0690">Ribosome biogenesis</keyword>
<proteinExistence type="inferred from homology"/>